<sequence>MEISRLAQSKRNIISLNMDLERDTQRIDEANQKLLLKIQEREDKIQRLESEIIQTRGLVEDEEWEKENRTTMERERALQELEEETARLERKNKTLVHSITELQQKLTRKSQKITNCEQSSPDGALEETKVKLQQLEASYACQEKELLKVMKEYAFVTQLCEDQALYIKKYQETLKKIEEELEALFLEREVSKLVSMNPVEKEHTSQNNEGTPTQKTARLFSKKIFCCLFFITLFFIRLLSYMFFHVRFINPDLLVNVLPKVLGRSTLWKLRCFFFPSLTLETEDMLPH</sequence>
<comment type="interaction">
    <interactant intactId="EBI-12821895">
        <id>Q8N6Q1</id>
    </interactant>
    <interactant intactId="EBI-749204">
        <id>O15155</id>
        <label>BET1</label>
    </interactant>
    <organismsDiffer>false</organismsDiffer>
    <experiments>3</experiments>
</comment>
<comment type="interaction">
    <interactant intactId="EBI-12821895">
        <id>Q8N6Q1</id>
    </interactant>
    <interactant intactId="EBI-747505">
        <id>Q8TAB5</id>
        <label>C1orf216</label>
    </interactant>
    <organismsDiffer>false</organismsDiffer>
    <experiments>3</experiments>
</comment>
<comment type="interaction">
    <interactant intactId="EBI-12821895">
        <id>Q8N6Q1</id>
    </interactant>
    <interactant intactId="EBI-4401517">
        <id>O14653</id>
        <label>GOSR2</label>
    </interactant>
    <organismsDiffer>false</organismsDiffer>
    <experiments>3</experiments>
</comment>
<comment type="interaction">
    <interactant intactId="EBI-12821895">
        <id>Q8N6Q1</id>
    </interactant>
    <interactant intactId="EBI-2852148">
        <id>Q9H2L4</id>
        <label>TMEM60</label>
    </interactant>
    <organismsDiffer>false</organismsDiffer>
    <experiments>3</experiments>
</comment>
<comment type="interaction">
    <interactant intactId="EBI-12821895">
        <id>Q8N6Q1</id>
    </interactant>
    <interactant intactId="EBI-17670824">
        <id>Q8WUV1</id>
        <label>TSPAN18</label>
    </interactant>
    <organismsDiffer>false</organismsDiffer>
    <experiments>3</experiments>
</comment>
<comment type="interaction">
    <interactant intactId="EBI-12821895">
        <id>Q8N6Q1</id>
    </interactant>
    <interactant intactId="EBI-10191195">
        <id>O95183</id>
        <label>VAMP5</label>
    </interactant>
    <organismsDiffer>false</organismsDiffer>
    <experiments>3</experiments>
</comment>
<comment type="interaction">
    <interactant intactId="EBI-12821895">
        <id>Q8N6Q1</id>
    </interactant>
    <interactant intactId="EBI-13387614">
        <id>A0A087WZY1</id>
    </interactant>
    <organismsDiffer>false</organismsDiffer>
    <experiments>3</experiments>
</comment>
<comment type="subcellular location">
    <subcellularLocation>
        <location evidence="1">Endoplasmic reticulum membrane</location>
        <topology evidence="2">Single-pass membrane protein</topology>
    </subcellularLocation>
    <subcellularLocation>
        <location evidence="1">Nucleus membrane</location>
        <topology evidence="2">Single-pass membrane protein</topology>
    </subcellularLocation>
</comment>
<comment type="alternative products">
    <event type="alternative splicing"/>
    <isoform>
        <id>Q8N6Q1-1</id>
        <name>1</name>
        <sequence type="displayed"/>
    </isoform>
    <isoform>
        <id>Q8N6Q1-2</id>
        <name>2</name>
        <sequence type="described" ref="VSP_028246 VSP_028247"/>
    </isoform>
</comment>
<comment type="similarity">
    <text evidence="4">Belongs to the TMCO5 family.</text>
</comment>
<keyword id="KW-0025">Alternative splicing</keyword>
<keyword id="KW-0175">Coiled coil</keyword>
<keyword id="KW-0256">Endoplasmic reticulum</keyword>
<keyword id="KW-0472">Membrane</keyword>
<keyword id="KW-0539">Nucleus</keyword>
<keyword id="KW-1267">Proteomics identification</keyword>
<keyword id="KW-1185">Reference proteome</keyword>
<keyword id="KW-0812">Transmembrane</keyword>
<keyword id="KW-1133">Transmembrane helix</keyword>
<name>TMC5A_HUMAN</name>
<reference key="1">
    <citation type="journal article" date="2004" name="Nat. Genet.">
        <title>Complete sequencing and characterization of 21,243 full-length human cDNAs.</title>
        <authorList>
            <person name="Ota T."/>
            <person name="Suzuki Y."/>
            <person name="Nishikawa T."/>
            <person name="Otsuki T."/>
            <person name="Sugiyama T."/>
            <person name="Irie R."/>
            <person name="Wakamatsu A."/>
            <person name="Hayashi K."/>
            <person name="Sato H."/>
            <person name="Nagai K."/>
            <person name="Kimura K."/>
            <person name="Makita H."/>
            <person name="Sekine M."/>
            <person name="Obayashi M."/>
            <person name="Nishi T."/>
            <person name="Shibahara T."/>
            <person name="Tanaka T."/>
            <person name="Ishii S."/>
            <person name="Yamamoto J."/>
            <person name="Saito K."/>
            <person name="Kawai Y."/>
            <person name="Isono Y."/>
            <person name="Nakamura Y."/>
            <person name="Nagahari K."/>
            <person name="Murakami K."/>
            <person name="Yasuda T."/>
            <person name="Iwayanagi T."/>
            <person name="Wagatsuma M."/>
            <person name="Shiratori A."/>
            <person name="Sudo H."/>
            <person name="Hosoiri T."/>
            <person name="Kaku Y."/>
            <person name="Kodaira H."/>
            <person name="Kondo H."/>
            <person name="Sugawara M."/>
            <person name="Takahashi M."/>
            <person name="Kanda K."/>
            <person name="Yokoi T."/>
            <person name="Furuya T."/>
            <person name="Kikkawa E."/>
            <person name="Omura Y."/>
            <person name="Abe K."/>
            <person name="Kamihara K."/>
            <person name="Katsuta N."/>
            <person name="Sato K."/>
            <person name="Tanikawa M."/>
            <person name="Yamazaki M."/>
            <person name="Ninomiya K."/>
            <person name="Ishibashi T."/>
            <person name="Yamashita H."/>
            <person name="Murakawa K."/>
            <person name="Fujimori K."/>
            <person name="Tanai H."/>
            <person name="Kimata M."/>
            <person name="Watanabe M."/>
            <person name="Hiraoka S."/>
            <person name="Chiba Y."/>
            <person name="Ishida S."/>
            <person name="Ono Y."/>
            <person name="Takiguchi S."/>
            <person name="Watanabe S."/>
            <person name="Yosida M."/>
            <person name="Hotuta T."/>
            <person name="Kusano J."/>
            <person name="Kanehori K."/>
            <person name="Takahashi-Fujii A."/>
            <person name="Hara H."/>
            <person name="Tanase T.-O."/>
            <person name="Nomura Y."/>
            <person name="Togiya S."/>
            <person name="Komai F."/>
            <person name="Hara R."/>
            <person name="Takeuchi K."/>
            <person name="Arita M."/>
            <person name="Imose N."/>
            <person name="Musashino K."/>
            <person name="Yuuki H."/>
            <person name="Oshima A."/>
            <person name="Sasaki N."/>
            <person name="Aotsuka S."/>
            <person name="Yoshikawa Y."/>
            <person name="Matsunawa H."/>
            <person name="Ichihara T."/>
            <person name="Shiohata N."/>
            <person name="Sano S."/>
            <person name="Moriya S."/>
            <person name="Momiyama H."/>
            <person name="Satoh N."/>
            <person name="Takami S."/>
            <person name="Terashima Y."/>
            <person name="Suzuki O."/>
            <person name="Nakagawa S."/>
            <person name="Senoh A."/>
            <person name="Mizoguchi H."/>
            <person name="Goto Y."/>
            <person name="Shimizu F."/>
            <person name="Wakebe H."/>
            <person name="Hishigaki H."/>
            <person name="Watanabe T."/>
            <person name="Sugiyama A."/>
            <person name="Takemoto M."/>
            <person name="Kawakami B."/>
            <person name="Yamazaki M."/>
            <person name="Watanabe K."/>
            <person name="Kumagai A."/>
            <person name="Itakura S."/>
            <person name="Fukuzumi Y."/>
            <person name="Fujimori Y."/>
            <person name="Komiyama M."/>
            <person name="Tashiro H."/>
            <person name="Tanigami A."/>
            <person name="Fujiwara T."/>
            <person name="Ono T."/>
            <person name="Yamada K."/>
            <person name="Fujii Y."/>
            <person name="Ozaki K."/>
            <person name="Hirao M."/>
            <person name="Ohmori Y."/>
            <person name="Kawabata A."/>
            <person name="Hikiji T."/>
            <person name="Kobatake N."/>
            <person name="Inagaki H."/>
            <person name="Ikema Y."/>
            <person name="Okamoto S."/>
            <person name="Okitani R."/>
            <person name="Kawakami T."/>
            <person name="Noguchi S."/>
            <person name="Itoh T."/>
            <person name="Shigeta K."/>
            <person name="Senba T."/>
            <person name="Matsumura K."/>
            <person name="Nakajima Y."/>
            <person name="Mizuno T."/>
            <person name="Morinaga M."/>
            <person name="Sasaki M."/>
            <person name="Togashi T."/>
            <person name="Oyama M."/>
            <person name="Hata H."/>
            <person name="Watanabe M."/>
            <person name="Komatsu T."/>
            <person name="Mizushima-Sugano J."/>
            <person name="Satoh T."/>
            <person name="Shirai Y."/>
            <person name="Takahashi Y."/>
            <person name="Nakagawa K."/>
            <person name="Okumura K."/>
            <person name="Nagase T."/>
            <person name="Nomura N."/>
            <person name="Kikuchi H."/>
            <person name="Masuho Y."/>
            <person name="Yamashita R."/>
            <person name="Nakai K."/>
            <person name="Yada T."/>
            <person name="Nakamura Y."/>
            <person name="Ohara O."/>
            <person name="Isogai T."/>
            <person name="Sugano S."/>
        </authorList>
    </citation>
    <scope>NUCLEOTIDE SEQUENCE [LARGE SCALE MRNA] (ISOFORM 2)</scope>
    <source>
        <tissue>Testis</tissue>
    </source>
</reference>
<reference key="2">
    <citation type="journal article" date="2004" name="Genome Res.">
        <title>The status, quality, and expansion of the NIH full-length cDNA project: the Mammalian Gene Collection (MGC).</title>
        <authorList>
            <consortium name="The MGC Project Team"/>
        </authorList>
    </citation>
    <scope>NUCLEOTIDE SEQUENCE [LARGE SCALE MRNA] (ISOFORM 1)</scope>
    <source>
        <tissue>Brain</tissue>
    </source>
</reference>
<accession>Q8N6Q1</accession>
<accession>Q8NA63</accession>
<proteinExistence type="evidence at protein level"/>
<organism>
    <name type="scientific">Homo sapiens</name>
    <name type="common">Human</name>
    <dbReference type="NCBI Taxonomy" id="9606"/>
    <lineage>
        <taxon>Eukaryota</taxon>
        <taxon>Metazoa</taxon>
        <taxon>Chordata</taxon>
        <taxon>Craniata</taxon>
        <taxon>Vertebrata</taxon>
        <taxon>Euteleostomi</taxon>
        <taxon>Mammalia</taxon>
        <taxon>Eutheria</taxon>
        <taxon>Euarchontoglires</taxon>
        <taxon>Primates</taxon>
        <taxon>Haplorrhini</taxon>
        <taxon>Catarrhini</taxon>
        <taxon>Hominidae</taxon>
        <taxon>Homo</taxon>
    </lineage>
</organism>
<dbReference type="EMBL" id="AK093126">
    <property type="protein sequence ID" value="BAC04065.1"/>
    <property type="molecule type" value="mRNA"/>
</dbReference>
<dbReference type="EMBL" id="BC029221">
    <property type="protein sequence ID" value="AAH29221.2"/>
    <property type="molecule type" value="mRNA"/>
</dbReference>
<dbReference type="CCDS" id="CCDS10046.1">
    <molecule id="Q8N6Q1-1"/>
</dbReference>
<dbReference type="CCDS" id="CCDS81862.1">
    <molecule id="Q8N6Q1-2"/>
</dbReference>
<dbReference type="RefSeq" id="NP_001317184.1">
    <molecule id="Q8N6Q1-2"/>
    <property type="nucleotide sequence ID" value="NM_001330255.2"/>
</dbReference>
<dbReference type="RefSeq" id="NP_001357664.1">
    <molecule id="Q8N6Q1-1"/>
    <property type="nucleotide sequence ID" value="NM_001370735.1"/>
</dbReference>
<dbReference type="RefSeq" id="NP_689666.2">
    <molecule id="Q8N6Q1-1"/>
    <property type="nucleotide sequence ID" value="NM_152453.3"/>
</dbReference>
<dbReference type="RefSeq" id="XP_005254225.1">
    <property type="nucleotide sequence ID" value="XM_005254168.3"/>
</dbReference>
<dbReference type="SMR" id="Q8N6Q1"/>
<dbReference type="BioGRID" id="126954">
    <property type="interactions" value="9"/>
</dbReference>
<dbReference type="FunCoup" id="Q8N6Q1">
    <property type="interactions" value="3"/>
</dbReference>
<dbReference type="IntAct" id="Q8N6Q1">
    <property type="interactions" value="8"/>
</dbReference>
<dbReference type="STRING" id="9606.ENSP00000327234"/>
<dbReference type="iPTMnet" id="Q8N6Q1"/>
<dbReference type="PhosphoSitePlus" id="Q8N6Q1"/>
<dbReference type="BioMuta" id="TMCO5A"/>
<dbReference type="DMDM" id="74759950"/>
<dbReference type="jPOST" id="Q8N6Q1"/>
<dbReference type="MassIVE" id="Q8N6Q1"/>
<dbReference type="PaxDb" id="9606-ENSP00000327234"/>
<dbReference type="PeptideAtlas" id="Q8N6Q1"/>
<dbReference type="ProteomicsDB" id="72210">
    <molecule id="Q8N6Q1-1"/>
</dbReference>
<dbReference type="ProteomicsDB" id="72211">
    <molecule id="Q8N6Q1-2"/>
</dbReference>
<dbReference type="Antibodypedia" id="67483">
    <property type="antibodies" value="28 antibodies from 8 providers"/>
</dbReference>
<dbReference type="DNASU" id="145942"/>
<dbReference type="Ensembl" id="ENST00000319669.5">
    <molecule id="Q8N6Q1-1"/>
    <property type="protein sequence ID" value="ENSP00000327234.4"/>
    <property type="gene ID" value="ENSG00000166069.14"/>
</dbReference>
<dbReference type="Ensembl" id="ENST00000559502.5">
    <molecule id="Q8N6Q1-2"/>
    <property type="protein sequence ID" value="ENSP00000454112.1"/>
    <property type="gene ID" value="ENSG00000166069.14"/>
</dbReference>
<dbReference type="GeneID" id="145942"/>
<dbReference type="KEGG" id="hsa:145942"/>
<dbReference type="MANE-Select" id="ENST00000319669.5">
    <property type="protein sequence ID" value="ENSP00000327234.4"/>
    <property type="RefSeq nucleotide sequence ID" value="NM_152453.4"/>
    <property type="RefSeq protein sequence ID" value="NP_689666.2"/>
</dbReference>
<dbReference type="UCSC" id="uc001zjv.1">
    <molecule id="Q8N6Q1-1"/>
    <property type="organism name" value="human"/>
</dbReference>
<dbReference type="AGR" id="HGNC:28558"/>
<dbReference type="CTD" id="145942"/>
<dbReference type="DisGeNET" id="145942"/>
<dbReference type="GeneCards" id="TMCO5A"/>
<dbReference type="HGNC" id="HGNC:28558">
    <property type="gene designation" value="TMCO5A"/>
</dbReference>
<dbReference type="HPA" id="ENSG00000166069">
    <property type="expression patterns" value="Tissue enriched (testis)"/>
</dbReference>
<dbReference type="MalaCards" id="TMCO5A"/>
<dbReference type="neXtProt" id="NX_Q8N6Q1"/>
<dbReference type="OpenTargets" id="ENSG00000166069"/>
<dbReference type="PharmGKB" id="PA162405808"/>
<dbReference type="VEuPathDB" id="HostDB:ENSG00000166069"/>
<dbReference type="eggNOG" id="ENOG502TDSB">
    <property type="taxonomic scope" value="Eukaryota"/>
</dbReference>
<dbReference type="GeneTree" id="ENSGT00940000153380"/>
<dbReference type="HOGENOM" id="CLU_061400_0_0_1"/>
<dbReference type="InParanoid" id="Q8N6Q1"/>
<dbReference type="OMA" id="CTTMERE"/>
<dbReference type="OrthoDB" id="9836264at2759"/>
<dbReference type="PAN-GO" id="Q8N6Q1">
    <property type="GO annotations" value="0 GO annotations based on evolutionary models"/>
</dbReference>
<dbReference type="PhylomeDB" id="Q8N6Q1"/>
<dbReference type="TreeFam" id="TF337140"/>
<dbReference type="PathwayCommons" id="Q8N6Q1"/>
<dbReference type="SignaLink" id="Q8N6Q1"/>
<dbReference type="BioGRID-ORCS" id="145942">
    <property type="hits" value="14 hits in 1138 CRISPR screens"/>
</dbReference>
<dbReference type="ChiTaRS" id="TMCO5A">
    <property type="organism name" value="human"/>
</dbReference>
<dbReference type="GenomeRNAi" id="145942"/>
<dbReference type="Pharos" id="Q8N6Q1">
    <property type="development level" value="Tdark"/>
</dbReference>
<dbReference type="PRO" id="PR:Q8N6Q1"/>
<dbReference type="Proteomes" id="UP000005640">
    <property type="component" value="Chromosome 15"/>
</dbReference>
<dbReference type="RNAct" id="Q8N6Q1">
    <property type="molecule type" value="protein"/>
</dbReference>
<dbReference type="Bgee" id="ENSG00000166069">
    <property type="expression patterns" value="Expressed in left testis and 66 other cell types or tissues"/>
</dbReference>
<dbReference type="ExpressionAtlas" id="Q8N6Q1">
    <property type="expression patterns" value="baseline and differential"/>
</dbReference>
<dbReference type="GO" id="GO:0005789">
    <property type="term" value="C:endoplasmic reticulum membrane"/>
    <property type="evidence" value="ECO:0007669"/>
    <property type="project" value="UniProtKB-SubCell"/>
</dbReference>
<dbReference type="GO" id="GO:0031965">
    <property type="term" value="C:nuclear membrane"/>
    <property type="evidence" value="ECO:0007669"/>
    <property type="project" value="UniProtKB-SubCell"/>
</dbReference>
<dbReference type="InterPro" id="IPR026617">
    <property type="entry name" value="SMCO2/5"/>
</dbReference>
<dbReference type="PANTHER" id="PTHR22422:SF7">
    <property type="entry name" value="TRANSMEMBRANE AND COILED-COIL DOMAIN-CONTAINING PROTEIN 5A"/>
    <property type="match status" value="1"/>
</dbReference>
<dbReference type="PANTHER" id="PTHR22422">
    <property type="entry name" value="TRANSMEMBRANE AND COILED-COIL DOMAIN-CONTAINING PROTEIN 5B-RELATED"/>
    <property type="match status" value="1"/>
</dbReference>
<dbReference type="Pfam" id="PF14992">
    <property type="entry name" value="TMCO5"/>
    <property type="match status" value="1"/>
</dbReference>
<feature type="chain" id="PRO_0000305153" description="Transmembrane and coiled-coil domain-containing protein 5A">
    <location>
        <begin position="1"/>
        <end position="288"/>
    </location>
</feature>
<feature type="transmembrane region" description="Helical" evidence="2">
    <location>
        <begin position="224"/>
        <end position="244"/>
    </location>
</feature>
<feature type="coiled-coil region" evidence="2">
    <location>
        <begin position="10"/>
        <end position="192"/>
    </location>
</feature>
<feature type="splice variant" id="VSP_028246" description="In isoform 2." evidence="3">
    <original>IFCCL</original>
    <variation>WASSF</variation>
    <location>
        <begin position="224"/>
        <end position="228"/>
    </location>
</feature>
<feature type="splice variant" id="VSP_028247" description="In isoform 2." evidence="3">
    <location>
        <begin position="229"/>
        <end position="288"/>
    </location>
</feature>
<feature type="sequence conflict" description="In Ref. 1; BAC04065." evidence="4" ref="1">
    <original>G</original>
    <variation>D</variation>
    <location>
        <position position="57"/>
    </location>
</feature>
<feature type="sequence conflict" description="In Ref. 1; BAC04065." evidence="4" ref="1">
    <original>K</original>
    <variation>E</variation>
    <location>
        <position position="201"/>
    </location>
</feature>
<evidence type="ECO:0000250" key="1">
    <source>
        <dbReference type="UniProtKB" id="D3ZNV2"/>
    </source>
</evidence>
<evidence type="ECO:0000255" key="2"/>
<evidence type="ECO:0000303" key="3">
    <source>
    </source>
</evidence>
<evidence type="ECO:0000305" key="4"/>
<protein>
    <recommendedName>
        <fullName>Transmembrane and coiled-coil domain-containing protein 5A</fullName>
    </recommendedName>
</protein>
<gene>
    <name type="primary">TMCO5A</name>
    <name type="synonym">TMCO5</name>
</gene>